<keyword id="KW-0963">Cytoplasm</keyword>
<keyword id="KW-0378">Hydrolase</keyword>
<keyword id="KW-0645">Protease</keyword>
<keyword id="KW-0788">Thiol protease</keyword>
<organism>
    <name type="scientific">Clostridium perfringens (strain SM101 / Type A)</name>
    <dbReference type="NCBI Taxonomy" id="289380"/>
    <lineage>
        <taxon>Bacteria</taxon>
        <taxon>Bacillati</taxon>
        <taxon>Bacillota</taxon>
        <taxon>Clostridia</taxon>
        <taxon>Eubacteriales</taxon>
        <taxon>Clostridiaceae</taxon>
        <taxon>Clostridium</taxon>
    </lineage>
</organism>
<name>PCP_CLOPS</name>
<accession>Q0ST25</accession>
<protein>
    <recommendedName>
        <fullName evidence="1">Pyrrolidone-carboxylate peptidase</fullName>
        <ecNumber evidence="1">3.4.19.3</ecNumber>
    </recommendedName>
    <alternativeName>
        <fullName evidence="1">5-oxoprolyl-peptidase</fullName>
    </alternativeName>
    <alternativeName>
        <fullName evidence="1">Pyroglutamyl-peptidase I</fullName>
        <shortName evidence="1">PGP-I</shortName>
        <shortName evidence="1">Pyrase</shortName>
    </alternativeName>
</protein>
<feature type="chain" id="PRO_1000050128" description="Pyrrolidone-carboxylate peptidase">
    <location>
        <begin position="1"/>
        <end position="213"/>
    </location>
</feature>
<feature type="active site" evidence="1">
    <location>
        <position position="78"/>
    </location>
</feature>
<feature type="active site" evidence="1">
    <location>
        <position position="141"/>
    </location>
</feature>
<feature type="active site" evidence="1">
    <location>
        <position position="165"/>
    </location>
</feature>
<comment type="function">
    <text evidence="1">Removes 5-oxoproline from various penultimate amino acid residues except L-proline.</text>
</comment>
<comment type="catalytic activity">
    <reaction evidence="1">
        <text>Release of an N-terminal pyroglutamyl group from a polypeptide, the second amino acid generally not being Pro.</text>
        <dbReference type="EC" id="3.4.19.3"/>
    </reaction>
</comment>
<comment type="subunit">
    <text evidence="1">Homotetramer.</text>
</comment>
<comment type="subcellular location">
    <subcellularLocation>
        <location evidence="1">Cytoplasm</location>
    </subcellularLocation>
</comment>
<comment type="similarity">
    <text evidence="1">Belongs to the peptidase C15 family.</text>
</comment>
<sequence>MKVLITGFDSFGGESINPALEAVKMIPENIEGAQVIKLEIPTVFRKSLEKIEEKIEEINPDIVISIGQAGGRFGVTPERVAINMDDARIEDNEGNQPIDISIYEDGESAYFSNLPIKAMVKEMVDNGIPASVSNTAGTFVCNHVMYGVLYLVNKKYKNIRAGFIHVPYIPAQVVNKPNTPSMSINDIAKGLELSIKAIVLNDNDIKTVGGAVC</sequence>
<proteinExistence type="inferred from homology"/>
<dbReference type="EC" id="3.4.19.3" evidence="1"/>
<dbReference type="EMBL" id="CP000312">
    <property type="protein sequence ID" value="ABG87062.1"/>
    <property type="molecule type" value="Genomic_DNA"/>
</dbReference>
<dbReference type="RefSeq" id="WP_011592377.1">
    <property type="nucleotide sequence ID" value="NC_008262.1"/>
</dbReference>
<dbReference type="SMR" id="Q0ST25"/>
<dbReference type="MEROPS" id="C15.001"/>
<dbReference type="KEGG" id="cpr:CPR_1413"/>
<dbReference type="Proteomes" id="UP000001824">
    <property type="component" value="Chromosome"/>
</dbReference>
<dbReference type="GO" id="GO:0005829">
    <property type="term" value="C:cytosol"/>
    <property type="evidence" value="ECO:0007669"/>
    <property type="project" value="InterPro"/>
</dbReference>
<dbReference type="GO" id="GO:0016920">
    <property type="term" value="F:pyroglutamyl-peptidase activity"/>
    <property type="evidence" value="ECO:0007669"/>
    <property type="project" value="UniProtKB-UniRule"/>
</dbReference>
<dbReference type="GO" id="GO:0006508">
    <property type="term" value="P:proteolysis"/>
    <property type="evidence" value="ECO:0007669"/>
    <property type="project" value="UniProtKB-KW"/>
</dbReference>
<dbReference type="CDD" id="cd00501">
    <property type="entry name" value="Peptidase_C15"/>
    <property type="match status" value="1"/>
</dbReference>
<dbReference type="FunFam" id="3.40.630.20:FF:000001">
    <property type="entry name" value="Pyrrolidone-carboxylate peptidase"/>
    <property type="match status" value="1"/>
</dbReference>
<dbReference type="Gene3D" id="3.40.630.20">
    <property type="entry name" value="Peptidase C15, pyroglutamyl peptidase I-like"/>
    <property type="match status" value="1"/>
</dbReference>
<dbReference type="HAMAP" id="MF_00417">
    <property type="entry name" value="Pyrrolid_peptidase"/>
    <property type="match status" value="1"/>
</dbReference>
<dbReference type="InterPro" id="IPR000816">
    <property type="entry name" value="Peptidase_C15"/>
</dbReference>
<dbReference type="InterPro" id="IPR016125">
    <property type="entry name" value="Peptidase_C15-like"/>
</dbReference>
<dbReference type="InterPro" id="IPR036440">
    <property type="entry name" value="Peptidase_C15-like_sf"/>
</dbReference>
<dbReference type="InterPro" id="IPR029762">
    <property type="entry name" value="PGP-I_bact-type"/>
</dbReference>
<dbReference type="InterPro" id="IPR033694">
    <property type="entry name" value="PGPEP1_Cys_AS"/>
</dbReference>
<dbReference type="InterPro" id="IPR033693">
    <property type="entry name" value="PGPEP1_Glu_AS"/>
</dbReference>
<dbReference type="NCBIfam" id="NF009676">
    <property type="entry name" value="PRK13197.1"/>
    <property type="match status" value="1"/>
</dbReference>
<dbReference type="NCBIfam" id="TIGR00504">
    <property type="entry name" value="pyro_pdase"/>
    <property type="match status" value="1"/>
</dbReference>
<dbReference type="PANTHER" id="PTHR23402">
    <property type="entry name" value="PROTEASE FAMILY C15 PYROGLUTAMYL-PEPTIDASE I-RELATED"/>
    <property type="match status" value="1"/>
</dbReference>
<dbReference type="PANTHER" id="PTHR23402:SF1">
    <property type="entry name" value="PYROGLUTAMYL-PEPTIDASE I"/>
    <property type="match status" value="1"/>
</dbReference>
<dbReference type="Pfam" id="PF01470">
    <property type="entry name" value="Peptidase_C15"/>
    <property type="match status" value="1"/>
</dbReference>
<dbReference type="PIRSF" id="PIRSF015592">
    <property type="entry name" value="Prld-crbxl_pptds"/>
    <property type="match status" value="1"/>
</dbReference>
<dbReference type="PRINTS" id="PR00706">
    <property type="entry name" value="PYROGLUPTASE"/>
</dbReference>
<dbReference type="SUPFAM" id="SSF53182">
    <property type="entry name" value="Pyrrolidone carboxyl peptidase (pyroglutamate aminopeptidase)"/>
    <property type="match status" value="1"/>
</dbReference>
<dbReference type="PROSITE" id="PS01334">
    <property type="entry name" value="PYRASE_CYS"/>
    <property type="match status" value="1"/>
</dbReference>
<dbReference type="PROSITE" id="PS01333">
    <property type="entry name" value="PYRASE_GLU"/>
    <property type="match status" value="1"/>
</dbReference>
<evidence type="ECO:0000255" key="1">
    <source>
        <dbReference type="HAMAP-Rule" id="MF_00417"/>
    </source>
</evidence>
<reference key="1">
    <citation type="journal article" date="2006" name="Genome Res.">
        <title>Skewed genomic variability in strains of the toxigenic bacterial pathogen, Clostridium perfringens.</title>
        <authorList>
            <person name="Myers G.S.A."/>
            <person name="Rasko D.A."/>
            <person name="Cheung J.K."/>
            <person name="Ravel J."/>
            <person name="Seshadri R."/>
            <person name="DeBoy R.T."/>
            <person name="Ren Q."/>
            <person name="Varga J."/>
            <person name="Awad M.M."/>
            <person name="Brinkac L.M."/>
            <person name="Daugherty S.C."/>
            <person name="Haft D.H."/>
            <person name="Dodson R.J."/>
            <person name="Madupu R."/>
            <person name="Nelson W.C."/>
            <person name="Rosovitz M.J."/>
            <person name="Sullivan S.A."/>
            <person name="Khouri H."/>
            <person name="Dimitrov G.I."/>
            <person name="Watkins K.L."/>
            <person name="Mulligan S."/>
            <person name="Benton J."/>
            <person name="Radune D."/>
            <person name="Fisher D.J."/>
            <person name="Atkins H.S."/>
            <person name="Hiscox T."/>
            <person name="Jost B.H."/>
            <person name="Billington S.J."/>
            <person name="Songer J.G."/>
            <person name="McClane B.A."/>
            <person name="Titball R.W."/>
            <person name="Rood J.I."/>
            <person name="Melville S.B."/>
            <person name="Paulsen I.T."/>
        </authorList>
    </citation>
    <scope>NUCLEOTIDE SEQUENCE [LARGE SCALE GENOMIC DNA]</scope>
    <source>
        <strain>SM101 / Type A</strain>
    </source>
</reference>
<gene>
    <name evidence="1" type="primary">pcp</name>
    <name type="ordered locus">CPR_1413</name>
</gene>